<proteinExistence type="predicted"/>
<name>YUZK_BACSU</name>
<protein>
    <recommendedName>
        <fullName>Uncharacterized protein YuzK</fullName>
    </recommendedName>
</protein>
<gene>
    <name type="primary">yuzK</name>
    <name type="ordered locus">BSU32719</name>
</gene>
<feature type="chain" id="PRO_0000386673" description="Uncharacterized protein YuzK">
    <location>
        <begin position="1"/>
        <end position="45"/>
    </location>
</feature>
<keyword id="KW-1185">Reference proteome</keyword>
<organism>
    <name type="scientific">Bacillus subtilis (strain 168)</name>
    <dbReference type="NCBI Taxonomy" id="224308"/>
    <lineage>
        <taxon>Bacteria</taxon>
        <taxon>Bacillati</taxon>
        <taxon>Bacillota</taxon>
        <taxon>Bacilli</taxon>
        <taxon>Bacillales</taxon>
        <taxon>Bacillaceae</taxon>
        <taxon>Bacillus</taxon>
    </lineage>
</organism>
<sequence>MEKAMQLSHGIGYEEYGRRLETRMKVERQRELDYEKSKRISAGAY</sequence>
<accession>C0H3Q9</accession>
<dbReference type="EMBL" id="AL009126">
    <property type="protein sequence ID" value="CAX52688.1"/>
    <property type="molecule type" value="Genomic_DNA"/>
</dbReference>
<dbReference type="RefSeq" id="WP_003228600.1">
    <property type="nucleotide sequence ID" value="NZ_OZ025638.1"/>
</dbReference>
<dbReference type="RefSeq" id="YP_003097782.1">
    <property type="nucleotide sequence ID" value="NC_000964.3"/>
</dbReference>
<dbReference type="SMR" id="C0H3Q9"/>
<dbReference type="STRING" id="224308.BSU32719"/>
<dbReference type="PaxDb" id="224308-BSU32719"/>
<dbReference type="EnsemblBacteria" id="CAX52688">
    <property type="protein sequence ID" value="CAX52688"/>
    <property type="gene ID" value="BSU_32719"/>
</dbReference>
<dbReference type="GeneID" id="8303161"/>
<dbReference type="KEGG" id="bsu:BSU32719"/>
<dbReference type="PATRIC" id="fig|224308.43.peg.3423"/>
<dbReference type="InParanoid" id="C0H3Q9"/>
<dbReference type="OrthoDB" id="2454002at2"/>
<dbReference type="BioCyc" id="BSUB:BSU32719-MONOMER"/>
<dbReference type="Proteomes" id="UP000001570">
    <property type="component" value="Chromosome"/>
</dbReference>
<reference key="1">
    <citation type="journal article" date="1997" name="Nature">
        <title>The complete genome sequence of the Gram-positive bacterium Bacillus subtilis.</title>
        <authorList>
            <person name="Kunst F."/>
            <person name="Ogasawara N."/>
            <person name="Moszer I."/>
            <person name="Albertini A.M."/>
            <person name="Alloni G."/>
            <person name="Azevedo V."/>
            <person name="Bertero M.G."/>
            <person name="Bessieres P."/>
            <person name="Bolotin A."/>
            <person name="Borchert S."/>
            <person name="Borriss R."/>
            <person name="Boursier L."/>
            <person name="Brans A."/>
            <person name="Braun M."/>
            <person name="Brignell S.C."/>
            <person name="Bron S."/>
            <person name="Brouillet S."/>
            <person name="Bruschi C.V."/>
            <person name="Caldwell B."/>
            <person name="Capuano V."/>
            <person name="Carter N.M."/>
            <person name="Choi S.-K."/>
            <person name="Codani J.-J."/>
            <person name="Connerton I.F."/>
            <person name="Cummings N.J."/>
            <person name="Daniel R.A."/>
            <person name="Denizot F."/>
            <person name="Devine K.M."/>
            <person name="Duesterhoeft A."/>
            <person name="Ehrlich S.D."/>
            <person name="Emmerson P.T."/>
            <person name="Entian K.-D."/>
            <person name="Errington J."/>
            <person name="Fabret C."/>
            <person name="Ferrari E."/>
            <person name="Foulger D."/>
            <person name="Fritz C."/>
            <person name="Fujita M."/>
            <person name="Fujita Y."/>
            <person name="Fuma S."/>
            <person name="Galizzi A."/>
            <person name="Galleron N."/>
            <person name="Ghim S.-Y."/>
            <person name="Glaser P."/>
            <person name="Goffeau A."/>
            <person name="Golightly E.J."/>
            <person name="Grandi G."/>
            <person name="Guiseppi G."/>
            <person name="Guy B.J."/>
            <person name="Haga K."/>
            <person name="Haiech J."/>
            <person name="Harwood C.R."/>
            <person name="Henaut A."/>
            <person name="Hilbert H."/>
            <person name="Holsappel S."/>
            <person name="Hosono S."/>
            <person name="Hullo M.-F."/>
            <person name="Itaya M."/>
            <person name="Jones L.-M."/>
            <person name="Joris B."/>
            <person name="Karamata D."/>
            <person name="Kasahara Y."/>
            <person name="Klaerr-Blanchard M."/>
            <person name="Klein C."/>
            <person name="Kobayashi Y."/>
            <person name="Koetter P."/>
            <person name="Koningstein G."/>
            <person name="Krogh S."/>
            <person name="Kumano M."/>
            <person name="Kurita K."/>
            <person name="Lapidus A."/>
            <person name="Lardinois S."/>
            <person name="Lauber J."/>
            <person name="Lazarevic V."/>
            <person name="Lee S.-M."/>
            <person name="Levine A."/>
            <person name="Liu H."/>
            <person name="Masuda S."/>
            <person name="Mauel C."/>
            <person name="Medigue C."/>
            <person name="Medina N."/>
            <person name="Mellado R.P."/>
            <person name="Mizuno M."/>
            <person name="Moestl D."/>
            <person name="Nakai S."/>
            <person name="Noback M."/>
            <person name="Noone D."/>
            <person name="O'Reilly M."/>
            <person name="Ogawa K."/>
            <person name="Ogiwara A."/>
            <person name="Oudega B."/>
            <person name="Park S.-H."/>
            <person name="Parro V."/>
            <person name="Pohl T.M."/>
            <person name="Portetelle D."/>
            <person name="Porwollik S."/>
            <person name="Prescott A.M."/>
            <person name="Presecan E."/>
            <person name="Pujic P."/>
            <person name="Purnelle B."/>
            <person name="Rapoport G."/>
            <person name="Rey M."/>
            <person name="Reynolds S."/>
            <person name="Rieger M."/>
            <person name="Rivolta C."/>
            <person name="Rocha E."/>
            <person name="Roche B."/>
            <person name="Rose M."/>
            <person name="Sadaie Y."/>
            <person name="Sato T."/>
            <person name="Scanlan E."/>
            <person name="Schleich S."/>
            <person name="Schroeter R."/>
            <person name="Scoffone F."/>
            <person name="Sekiguchi J."/>
            <person name="Sekowska A."/>
            <person name="Seror S.J."/>
            <person name="Serror P."/>
            <person name="Shin B.-S."/>
            <person name="Soldo B."/>
            <person name="Sorokin A."/>
            <person name="Tacconi E."/>
            <person name="Takagi T."/>
            <person name="Takahashi H."/>
            <person name="Takemaru K."/>
            <person name="Takeuchi M."/>
            <person name="Tamakoshi A."/>
            <person name="Tanaka T."/>
            <person name="Terpstra P."/>
            <person name="Tognoni A."/>
            <person name="Tosato V."/>
            <person name="Uchiyama S."/>
            <person name="Vandenbol M."/>
            <person name="Vannier F."/>
            <person name="Vassarotti A."/>
            <person name="Viari A."/>
            <person name="Wambutt R."/>
            <person name="Wedler E."/>
            <person name="Wedler H."/>
            <person name="Weitzenegger T."/>
            <person name="Winters P."/>
            <person name="Wipat A."/>
            <person name="Yamamoto H."/>
            <person name="Yamane K."/>
            <person name="Yasumoto K."/>
            <person name="Yata K."/>
            <person name="Yoshida K."/>
            <person name="Yoshikawa H.-F."/>
            <person name="Zumstein E."/>
            <person name="Yoshikawa H."/>
            <person name="Danchin A."/>
        </authorList>
    </citation>
    <scope>NUCLEOTIDE SEQUENCE [LARGE SCALE GENOMIC DNA]</scope>
    <source>
        <strain>168</strain>
    </source>
</reference>